<name>MOBA_PASMU</name>
<dbReference type="EC" id="2.7.7.77" evidence="1"/>
<dbReference type="EMBL" id="AE004439">
    <property type="protein sequence ID" value="AAK03883.1"/>
    <property type="molecule type" value="Genomic_DNA"/>
</dbReference>
<dbReference type="RefSeq" id="WP_010907345.1">
    <property type="nucleotide sequence ID" value="NC_002663.1"/>
</dbReference>
<dbReference type="SMR" id="P57971"/>
<dbReference type="STRING" id="272843.PM1799"/>
<dbReference type="EnsemblBacteria" id="AAK03883">
    <property type="protein sequence ID" value="AAK03883"/>
    <property type="gene ID" value="PM1799"/>
</dbReference>
<dbReference type="KEGG" id="pmu:PM1799"/>
<dbReference type="PATRIC" id="fig|272843.6.peg.1823"/>
<dbReference type="HOGENOM" id="CLU_055597_5_1_6"/>
<dbReference type="OrthoDB" id="9788394at2"/>
<dbReference type="Proteomes" id="UP000000809">
    <property type="component" value="Chromosome"/>
</dbReference>
<dbReference type="GO" id="GO:0005737">
    <property type="term" value="C:cytoplasm"/>
    <property type="evidence" value="ECO:0007669"/>
    <property type="project" value="UniProtKB-SubCell"/>
</dbReference>
<dbReference type="GO" id="GO:0005525">
    <property type="term" value="F:GTP binding"/>
    <property type="evidence" value="ECO:0007669"/>
    <property type="project" value="UniProtKB-UniRule"/>
</dbReference>
<dbReference type="GO" id="GO:0046872">
    <property type="term" value="F:metal ion binding"/>
    <property type="evidence" value="ECO:0007669"/>
    <property type="project" value="UniProtKB-KW"/>
</dbReference>
<dbReference type="GO" id="GO:0061603">
    <property type="term" value="F:molybdenum cofactor guanylyltransferase activity"/>
    <property type="evidence" value="ECO:0007669"/>
    <property type="project" value="UniProtKB-EC"/>
</dbReference>
<dbReference type="GO" id="GO:1902758">
    <property type="term" value="P:bis(molybdopterin guanine dinucleotide)molybdenum biosynthetic process"/>
    <property type="evidence" value="ECO:0007669"/>
    <property type="project" value="TreeGrafter"/>
</dbReference>
<dbReference type="CDD" id="cd02503">
    <property type="entry name" value="MobA"/>
    <property type="match status" value="1"/>
</dbReference>
<dbReference type="Gene3D" id="3.90.550.10">
    <property type="entry name" value="Spore Coat Polysaccharide Biosynthesis Protein SpsA, Chain A"/>
    <property type="match status" value="1"/>
</dbReference>
<dbReference type="HAMAP" id="MF_00316">
    <property type="entry name" value="MobA"/>
    <property type="match status" value="1"/>
</dbReference>
<dbReference type="InterPro" id="IPR025877">
    <property type="entry name" value="MobA-like_NTP_Trfase"/>
</dbReference>
<dbReference type="InterPro" id="IPR013482">
    <property type="entry name" value="Molybde_CF_guanTrfase"/>
</dbReference>
<dbReference type="InterPro" id="IPR029044">
    <property type="entry name" value="Nucleotide-diphossugar_trans"/>
</dbReference>
<dbReference type="NCBIfam" id="TIGR02665">
    <property type="entry name" value="molyb_mobA"/>
    <property type="match status" value="1"/>
</dbReference>
<dbReference type="PANTHER" id="PTHR19136">
    <property type="entry name" value="MOLYBDENUM COFACTOR GUANYLYLTRANSFERASE"/>
    <property type="match status" value="1"/>
</dbReference>
<dbReference type="PANTHER" id="PTHR19136:SF81">
    <property type="entry name" value="MOLYBDENUM COFACTOR GUANYLYLTRANSFERASE"/>
    <property type="match status" value="1"/>
</dbReference>
<dbReference type="Pfam" id="PF12804">
    <property type="entry name" value="NTP_transf_3"/>
    <property type="match status" value="1"/>
</dbReference>
<dbReference type="SUPFAM" id="SSF53448">
    <property type="entry name" value="Nucleotide-diphospho-sugar transferases"/>
    <property type="match status" value="1"/>
</dbReference>
<reference key="1">
    <citation type="journal article" date="2001" name="Proc. Natl. Acad. Sci. U.S.A.">
        <title>Complete genomic sequence of Pasteurella multocida Pm70.</title>
        <authorList>
            <person name="May B.J."/>
            <person name="Zhang Q."/>
            <person name="Li L.L."/>
            <person name="Paustian M.L."/>
            <person name="Whittam T.S."/>
            <person name="Kapur V."/>
        </authorList>
    </citation>
    <scope>NUCLEOTIDE SEQUENCE [LARGE SCALE GENOMIC DNA]</scope>
    <source>
        <strain>Pm70</strain>
    </source>
</reference>
<proteinExistence type="inferred from homology"/>
<keyword id="KW-0963">Cytoplasm</keyword>
<keyword id="KW-0342">GTP-binding</keyword>
<keyword id="KW-0460">Magnesium</keyword>
<keyword id="KW-0479">Metal-binding</keyword>
<keyword id="KW-0501">Molybdenum cofactor biosynthesis</keyword>
<keyword id="KW-0547">Nucleotide-binding</keyword>
<keyword id="KW-1185">Reference proteome</keyword>
<keyword id="KW-0808">Transferase</keyword>
<gene>
    <name evidence="1" type="primary">mobA</name>
    <name type="ordered locus">PM1799</name>
</gene>
<protein>
    <recommendedName>
        <fullName evidence="1">Molybdenum cofactor guanylyltransferase</fullName>
        <shortName evidence="1">MoCo guanylyltransferase</shortName>
        <ecNumber evidence="1">2.7.7.77</ecNumber>
    </recommendedName>
    <alternativeName>
        <fullName evidence="1">GTP:molybdopterin guanylyltransferase</fullName>
    </alternativeName>
    <alternativeName>
        <fullName evidence="1">Mo-MPT guanylyltransferase</fullName>
    </alternativeName>
    <alternativeName>
        <fullName evidence="1">Molybdopterin guanylyltransferase</fullName>
    </alternativeName>
    <alternativeName>
        <fullName evidence="1">Molybdopterin-guanine dinucleotide synthase</fullName>
        <shortName evidence="1">MGD synthase</shortName>
    </alternativeName>
</protein>
<comment type="function">
    <text evidence="1">Transfers a GMP moiety from GTP to Mo-molybdopterin (Mo-MPT) cofactor (Moco or molybdenum cofactor) to form Mo-molybdopterin guanine dinucleotide (Mo-MGD) cofactor.</text>
</comment>
<comment type="catalytic activity">
    <reaction evidence="1">
        <text>Mo-molybdopterin + GTP + H(+) = Mo-molybdopterin guanine dinucleotide + diphosphate</text>
        <dbReference type="Rhea" id="RHEA:34243"/>
        <dbReference type="ChEBI" id="CHEBI:15378"/>
        <dbReference type="ChEBI" id="CHEBI:33019"/>
        <dbReference type="ChEBI" id="CHEBI:37565"/>
        <dbReference type="ChEBI" id="CHEBI:71302"/>
        <dbReference type="ChEBI" id="CHEBI:71310"/>
        <dbReference type="EC" id="2.7.7.77"/>
    </reaction>
</comment>
<comment type="cofactor">
    <cofactor evidence="1">
        <name>Mg(2+)</name>
        <dbReference type="ChEBI" id="CHEBI:18420"/>
    </cofactor>
</comment>
<comment type="subunit">
    <text evidence="1">Monomer.</text>
</comment>
<comment type="subcellular location">
    <subcellularLocation>
        <location evidence="1">Cytoplasm</location>
    </subcellularLocation>
</comment>
<comment type="domain">
    <text evidence="1">The N-terminal domain determines nucleotide recognition and specific binding, while the C-terminal domain determines the specific binding to the target protein.</text>
</comment>
<comment type="similarity">
    <text evidence="1">Belongs to the MobA family.</text>
</comment>
<feature type="chain" id="PRO_0000134898" description="Molybdenum cofactor guanylyltransferase">
    <location>
        <begin position="1"/>
        <end position="189"/>
    </location>
</feature>
<feature type="binding site" evidence="1">
    <location>
        <begin position="10"/>
        <end position="12"/>
    </location>
    <ligand>
        <name>GTP</name>
        <dbReference type="ChEBI" id="CHEBI:37565"/>
    </ligand>
</feature>
<feature type="binding site" evidence="1">
    <location>
        <position position="23"/>
    </location>
    <ligand>
        <name>GTP</name>
        <dbReference type="ChEBI" id="CHEBI:37565"/>
    </ligand>
</feature>
<feature type="binding site" evidence="1">
    <location>
        <position position="51"/>
    </location>
    <ligand>
        <name>GTP</name>
        <dbReference type="ChEBI" id="CHEBI:37565"/>
    </ligand>
</feature>
<feature type="binding site" evidence="1">
    <location>
        <position position="69"/>
    </location>
    <ligand>
        <name>GTP</name>
        <dbReference type="ChEBI" id="CHEBI:37565"/>
    </ligand>
</feature>
<feature type="binding site" evidence="1">
    <location>
        <position position="99"/>
    </location>
    <ligand>
        <name>GTP</name>
        <dbReference type="ChEBI" id="CHEBI:37565"/>
    </ligand>
</feature>
<feature type="binding site" evidence="1">
    <location>
        <position position="99"/>
    </location>
    <ligand>
        <name>Mg(2+)</name>
        <dbReference type="ChEBI" id="CHEBI:18420"/>
    </ligand>
</feature>
<sequence>MTITFSAVILAGGQARRMGGVDKGLQLFRNQPLFEHIYQRLQPQIADVAINANRNQQRYAQSGLPVFSDDLAGFQGPLSGILTALQRAQSNFVLFVPCDCPFFPMDLFAKLKHAVISQHAQLAYAHDGEREHPTFCLVSTSLAPALAQYLATGERRMLTFMQQQHAIAVDFSATPDAFKNINNLVDLQT</sequence>
<accession>P57971</accession>
<evidence type="ECO:0000255" key="1">
    <source>
        <dbReference type="HAMAP-Rule" id="MF_00316"/>
    </source>
</evidence>
<organism>
    <name type="scientific">Pasteurella multocida (strain Pm70)</name>
    <dbReference type="NCBI Taxonomy" id="272843"/>
    <lineage>
        <taxon>Bacteria</taxon>
        <taxon>Pseudomonadati</taxon>
        <taxon>Pseudomonadota</taxon>
        <taxon>Gammaproteobacteria</taxon>
        <taxon>Pasteurellales</taxon>
        <taxon>Pasteurellaceae</taxon>
        <taxon>Pasteurella</taxon>
    </lineage>
</organism>